<protein>
    <recommendedName>
        <fullName evidence="1">Intermediate capsid protein VP6</fullName>
    </recommendedName>
</protein>
<evidence type="ECO:0000255" key="1">
    <source>
        <dbReference type="HAMAP-Rule" id="MF_04126"/>
    </source>
</evidence>
<organismHost>
    <name type="scientific">Homo sapiens</name>
    <name type="common">Human</name>
    <dbReference type="NCBI Taxonomy" id="9606"/>
</organismHost>
<comment type="function">
    <text evidence="1">Intermediate capsid protein that self assembles to form an icosahedral capsid with a T=13 symmetry, which consists of 230 trimers of VP6, with channels at each of its five-fold vertices. This capsid constitutes the middle concentric layer of the viral mature particle. The innermost VP2 capsid and the intermediate VP6 capsid remain intact following cell entry to protect the dsRNA from degradation and to prevent unfavorable antiviral responses in the host cell during all the replication cycle of the virus. Nascent transcripts are transcribed within the structural confines of this double-layered particle (DLP) and are extruded through the channels at the five-fold axes. VP6 is required for the transcription activity of the DLP.</text>
</comment>
<comment type="subunit">
    <text evidence="1">Homotrimer. Interacts with the inner capsid protein VP2. Interacts with the outer capsid glycoprotein VP7.</text>
</comment>
<comment type="subcellular location">
    <subcellularLocation>
        <location evidence="1">Virion</location>
    </subcellularLocation>
    <text evidence="1">Component of the intermediate capsid. Also found in spherical cytoplasmic structures, called virus factories, that appear early after infection and are the site of viral replication and packaging.</text>
</comment>
<comment type="similarity">
    <text evidence="1">Belongs to the rotavirus VP6 family.</text>
</comment>
<proteinExistence type="inferred from homology"/>
<reference key="1">
    <citation type="journal article" date="1992" name="Virology">
        <title>The correct sequence of the porcine group C/Cowden rotavirus major inner capsid protein shows close homology with human isolates from Brazil and the U.K.</title>
        <authorList>
            <person name="Cooke S.J."/>
            <person name="Clarke I.N."/>
            <person name="Freitas R.B."/>
            <person name="Gabbay Y.B."/>
            <person name="Lambden P.R."/>
        </authorList>
    </citation>
    <scope>NUCLEOTIDE SEQUENCE [GENOMIC RNA]</scope>
</reference>
<organism>
    <name type="scientific">Rotavirus C (isolate RVC/Human/United Kingdom/Preston/1992)</name>
    <name type="common">RV-C</name>
    <dbReference type="NCBI Taxonomy" id="31568"/>
    <lineage>
        <taxon>Viruses</taxon>
        <taxon>Riboviria</taxon>
        <taxon>Orthornavirae</taxon>
        <taxon>Duplornaviricota</taxon>
        <taxon>Resentoviricetes</taxon>
        <taxon>Reovirales</taxon>
        <taxon>Sedoreoviridae</taxon>
        <taxon>Rotavirus</taxon>
        <taxon>Rotavirus C</taxon>
    </lineage>
</organism>
<name>VP6_ROTHG</name>
<accession>P69483</accession>
<accession>P30213</accession>
<sequence>MDVLFSIAKTVSDLKKKVVVGTIYTNVEDVVQQTNELIRTLNGNIFHTGGIGTQPQKEWNFQLPQLGTTLLNLDDNYVQSTRGIIDFLSSFIEAVCDDEIVREASRNGMQPQSPALILLSSSKFKTINFNNSSQSIKNWNAQSRRENPVYEYKNPMLFEYKNSYILQRANPQFGSVMGLRYYTTSNTCQIAAFDSTLAENAPNNTQRFVYNGRLKRPISNVLMKIEAGAPNISNPTILPDPNNQTTWLFNPVQLMNGTFTIEFYNNGQLIDMVRNMGIVTVRTFDSYRITIDMIRPAAMTQYVQRIFPQGGPYHFQATYMLTLSILDATTESVLCDSHSVEYSIVANVRRDSAMPAGTVFQPGFPWEHTLSNYTVAQEDNLERLLLIASVKRMVM</sequence>
<dbReference type="EMBL" id="M94156">
    <property type="protein sequence ID" value="AAA47340.1"/>
    <property type="molecule type" value="Genomic_RNA"/>
</dbReference>
<dbReference type="PIR" id="A41041">
    <property type="entry name" value="VPXRCR"/>
</dbReference>
<dbReference type="SMR" id="P69483"/>
<dbReference type="GO" id="GO:0019031">
    <property type="term" value="C:viral envelope"/>
    <property type="evidence" value="ECO:0007669"/>
    <property type="project" value="UniProtKB-UniRule"/>
</dbReference>
<dbReference type="GO" id="GO:0039626">
    <property type="term" value="C:viral intermediate capsid"/>
    <property type="evidence" value="ECO:0007669"/>
    <property type="project" value="UniProtKB-UniRule"/>
</dbReference>
<dbReference type="GO" id="GO:0046789">
    <property type="term" value="F:host cell surface receptor binding"/>
    <property type="evidence" value="ECO:0007669"/>
    <property type="project" value="UniProtKB-UniRule"/>
</dbReference>
<dbReference type="GO" id="GO:0005198">
    <property type="term" value="F:structural molecule activity"/>
    <property type="evidence" value="ECO:0007669"/>
    <property type="project" value="UniProtKB-UniRule"/>
</dbReference>
<dbReference type="GO" id="GO:0019064">
    <property type="term" value="P:fusion of virus membrane with host plasma membrane"/>
    <property type="evidence" value="ECO:0007669"/>
    <property type="project" value="UniProtKB-UniRule"/>
</dbReference>
<dbReference type="Gene3D" id="2.60.120.170">
    <property type="match status" value="1"/>
</dbReference>
<dbReference type="Gene3D" id="1.10.1350.10">
    <property type="entry name" value="Viral capsid alpha domain"/>
    <property type="match status" value="1"/>
</dbReference>
<dbReference type="HAMAP" id="MF_04126">
    <property type="entry name" value="Rota_VP6"/>
    <property type="match status" value="1"/>
</dbReference>
<dbReference type="InterPro" id="IPR008980">
    <property type="entry name" value="Capsid_hemagglutn"/>
</dbReference>
<dbReference type="InterPro" id="IPR001385">
    <property type="entry name" value="Rotavirus_A/C_VP6"/>
</dbReference>
<dbReference type="InterPro" id="IPR008935">
    <property type="entry name" value="Virus_capsid_a-hlx_vir"/>
</dbReference>
<dbReference type="Pfam" id="PF00980">
    <property type="entry name" value="Rota_Capsid_VP6"/>
    <property type="match status" value="1"/>
</dbReference>
<dbReference type="SUPFAM" id="SSF48345">
    <property type="entry name" value="A virus capsid protein alpha-helical domain"/>
    <property type="match status" value="1"/>
</dbReference>
<dbReference type="SUPFAM" id="SSF49818">
    <property type="entry name" value="Viral protein domain"/>
    <property type="match status" value="1"/>
</dbReference>
<keyword id="KW-0167">Capsid protein</keyword>
<keyword id="KW-1154">Intermediate capsid protein</keyword>
<keyword id="KW-0946">Virion</keyword>
<feature type="chain" id="PRO_0000149571" description="Intermediate capsid protein VP6">
    <location>
        <begin position="1"/>
        <end position="395"/>
    </location>
</feature>